<reference key="1">
    <citation type="journal article" date="1995" name="Nucleic Acids Res.">
        <title>Analysis of the Escherichia coli genome VI: DNA sequence of the region from 92.8 through 100 minutes.</title>
        <authorList>
            <person name="Burland V.D."/>
            <person name="Plunkett G. III"/>
            <person name="Sofia H.J."/>
            <person name="Daniels D.L."/>
            <person name="Blattner F.R."/>
        </authorList>
    </citation>
    <scope>NUCLEOTIDE SEQUENCE [LARGE SCALE GENOMIC DNA]</scope>
    <source>
        <strain>K12 / MG1655 / ATCC 47076</strain>
    </source>
</reference>
<reference key="2">
    <citation type="journal article" date="1997" name="Science">
        <title>The complete genome sequence of Escherichia coli K-12.</title>
        <authorList>
            <person name="Blattner F.R."/>
            <person name="Plunkett G. III"/>
            <person name="Bloch C.A."/>
            <person name="Perna N.T."/>
            <person name="Burland V."/>
            <person name="Riley M."/>
            <person name="Collado-Vides J."/>
            <person name="Glasner J.D."/>
            <person name="Rode C.K."/>
            <person name="Mayhew G.F."/>
            <person name="Gregor J."/>
            <person name="Davis N.W."/>
            <person name="Kirkpatrick H.A."/>
            <person name="Goeden M.A."/>
            <person name="Rose D.J."/>
            <person name="Mau B."/>
            <person name="Shao Y."/>
        </authorList>
    </citation>
    <scope>NUCLEOTIDE SEQUENCE [LARGE SCALE GENOMIC DNA]</scope>
    <source>
        <strain>K12 / MG1655 / ATCC 47076</strain>
    </source>
</reference>
<reference key="3">
    <citation type="journal article" date="2006" name="Mol. Syst. Biol.">
        <title>Highly accurate genome sequences of Escherichia coli K-12 strains MG1655 and W3110.</title>
        <authorList>
            <person name="Hayashi K."/>
            <person name="Morooka N."/>
            <person name="Yamamoto Y."/>
            <person name="Fujita K."/>
            <person name="Isono K."/>
            <person name="Choi S."/>
            <person name="Ohtsubo E."/>
            <person name="Baba T."/>
            <person name="Wanner B.L."/>
            <person name="Mori H."/>
            <person name="Horiuchi T."/>
        </authorList>
    </citation>
    <scope>NUCLEOTIDE SEQUENCE [LARGE SCALE GENOMIC DNA]</scope>
    <source>
        <strain>K12 / W3110 / ATCC 27325 / DSM 5911</strain>
    </source>
</reference>
<reference key="4">
    <citation type="journal article" date="2001" name="J. Bacteriol.">
        <title>DNA microarray-mediated transcriptional profiling of the Escherichia coli response to hydrogen peroxide.</title>
        <authorList>
            <person name="Zheng M."/>
            <person name="Wang X."/>
            <person name="Templeton L.J."/>
            <person name="Smulski D.R."/>
            <person name="LaRossa R.A."/>
            <person name="Storz G."/>
        </authorList>
    </citation>
    <scope>INDUCTION BY HYDROGEN PEROXIDE</scope>
</reference>
<reference key="5">
    <citation type="journal article" date="2004" name="Mol. Microbiol.">
        <title>Identification of mutator genes and mutational pathways in Escherichia coli using a multicopy cloning approach.</title>
        <authorList>
            <person name="Yang H."/>
            <person name="Wolff E."/>
            <person name="Kim M."/>
            <person name="Diep A."/>
            <person name="Miller J.H."/>
        </authorList>
    </citation>
    <scope>MUTATOR PHENOTYPE</scope>
</reference>
<reference key="6">
    <citation type="journal article" date="2008" name="Mol. Microbiol.">
        <title>Multiple pathways for regulation of sigmaS (RpoS) stability in Escherichia coli via the action of multiple anti-adaptors.</title>
        <authorList>
            <person name="Bougdour A."/>
            <person name="Cunning C."/>
            <person name="Baptiste P.J."/>
            <person name="Elliott T."/>
            <person name="Gottesman S."/>
        </authorList>
    </citation>
    <scope>FUNCTION IN THE STABILIZATION OF RPOS</scope>
    <scope>INTERACTION WITH RSSB</scope>
    <source>
        <strain>K12 / MG1655 / ATCC 47076</strain>
    </source>
</reference>
<reference key="7">
    <citation type="journal article" date="2017" name="MBio">
        <title>Translational repression of the RpoS antiadapter IraD by CsrA is mediated via translational coupling to a short upstream open reading frame.</title>
        <authorList>
            <person name="Park H."/>
            <person name="McGibbon L.C."/>
            <person name="Potts A.H."/>
            <person name="Yakhnin H."/>
            <person name="Romeo T."/>
            <person name="Babitzke P."/>
        </authorList>
    </citation>
    <scope>MECHANISM OF TRANSLATION REGULATION</scope>
    <source>
        <strain>K12 / CF7789</strain>
    </source>
</reference>
<proteinExistence type="evidence at protein level"/>
<gene>
    <name type="primary">iraD</name>
    <name type="synonym">yjiD</name>
    <name type="ordered locus">b4326</name>
    <name type="ordered locus">JW5782</name>
</gene>
<comment type="function">
    <text evidence="2">Inhibits RpoS proteolysis by regulating RssB activity, thereby increasing the stability of the sigma stress factor RpoS during oxidative stress. Its effect on RpoS stability is due to its interaction with RssB, which probably blocks the interaction of RssB with RpoS, and the consequent delivery of the RssB-RpoS complex to the ClpXP protein degradation pathway.</text>
</comment>
<comment type="subunit">
    <text evidence="2">Interacts with RssB.</text>
</comment>
<comment type="interaction">
    <interactant intactId="EBI-6479779">
        <id>P39375</id>
    </interactant>
    <interactant intactId="EBI-1122979">
        <id>P0AEV1</id>
        <label>rssB</label>
    </interactant>
    <organismsDiffer>false</organismsDiffer>
    <experiments>4</experiments>
</comment>
<comment type="subcellular location">
    <subcellularLocation>
        <location evidence="4">Cytoplasm</location>
    </subcellularLocation>
</comment>
<comment type="induction">
    <text evidence="1 3">By oxidative stress (PubMed:11443091). Low expression in exponential phase, rises in stationary phase, translation is repressed by CsrA via translational coupling to the upstream open reading frame IdlP (at protein level) (PubMed:28851853).</text>
</comment>
<comment type="similarity">
    <text evidence="4">Belongs to the GpW/Gp25 family. IraD subfamily.</text>
</comment>
<comment type="sequence caution" evidence="4">
    <conflict type="erroneous initiation">
        <sequence resource="EMBL-CDS" id="AAA97222"/>
    </conflict>
    <text>Extended N-terminus.</text>
</comment>
<dbReference type="EMBL" id="U14003">
    <property type="protein sequence ID" value="AAA97222.1"/>
    <property type="status" value="ALT_INIT"/>
    <property type="molecule type" value="Genomic_DNA"/>
</dbReference>
<dbReference type="EMBL" id="U00096">
    <property type="protein sequence ID" value="AAC77282.2"/>
    <property type="molecule type" value="Genomic_DNA"/>
</dbReference>
<dbReference type="EMBL" id="AP009048">
    <property type="protein sequence ID" value="BAE78319.1"/>
    <property type="molecule type" value="Genomic_DNA"/>
</dbReference>
<dbReference type="PIR" id="S56551">
    <property type="entry name" value="S56551"/>
</dbReference>
<dbReference type="RefSeq" id="NP_418746.4">
    <property type="nucleotide sequence ID" value="NC_000913.3"/>
</dbReference>
<dbReference type="RefSeq" id="WP_001309187.1">
    <property type="nucleotide sequence ID" value="NZ_SSUV01000012.1"/>
</dbReference>
<dbReference type="PDB" id="6OD1">
    <property type="method" value="X-ray"/>
    <property type="resolution" value="2.00 A"/>
    <property type="chains" value="B=17-130"/>
</dbReference>
<dbReference type="PDBsum" id="6OD1"/>
<dbReference type="SMR" id="P39375"/>
<dbReference type="BioGRID" id="4261002">
    <property type="interactions" value="128"/>
</dbReference>
<dbReference type="FunCoup" id="P39375">
    <property type="interactions" value="148"/>
</dbReference>
<dbReference type="IntAct" id="P39375">
    <property type="interactions" value="1"/>
</dbReference>
<dbReference type="STRING" id="511145.b4326"/>
<dbReference type="PaxDb" id="511145-b4326"/>
<dbReference type="EnsemblBacteria" id="AAC77282">
    <property type="protein sequence ID" value="AAC77282"/>
    <property type="gene ID" value="b4326"/>
</dbReference>
<dbReference type="GeneID" id="948851"/>
<dbReference type="KEGG" id="ecj:JW5782"/>
<dbReference type="KEGG" id="eco:b4326"/>
<dbReference type="KEGG" id="ecoc:C3026_23385"/>
<dbReference type="PATRIC" id="fig|1411691.4.peg.2363"/>
<dbReference type="EchoBASE" id="EB2453"/>
<dbReference type="eggNOG" id="COG3518">
    <property type="taxonomic scope" value="Bacteria"/>
</dbReference>
<dbReference type="HOGENOM" id="CLU_1977621_0_0_6"/>
<dbReference type="InParanoid" id="P39375"/>
<dbReference type="OMA" id="FKEAYCH"/>
<dbReference type="OrthoDB" id="6572203at2"/>
<dbReference type="PhylomeDB" id="P39375"/>
<dbReference type="BioCyc" id="EcoCyc:G7923-MONOMER"/>
<dbReference type="PRO" id="PR:P39375"/>
<dbReference type="Proteomes" id="UP000000625">
    <property type="component" value="Chromosome"/>
</dbReference>
<dbReference type="GO" id="GO:0005737">
    <property type="term" value="C:cytoplasm"/>
    <property type="evidence" value="ECO:0007669"/>
    <property type="project" value="UniProtKB-SubCell"/>
</dbReference>
<dbReference type="GO" id="GO:0043856">
    <property type="term" value="F:anti-sigma factor antagonist activity"/>
    <property type="evidence" value="ECO:0000314"/>
    <property type="project" value="EcoCyc"/>
</dbReference>
<dbReference type="GO" id="GO:0034599">
    <property type="term" value="P:cellular response to oxidative stress"/>
    <property type="evidence" value="ECO:0007669"/>
    <property type="project" value="UniProtKB-UniRule"/>
</dbReference>
<dbReference type="GO" id="GO:0006974">
    <property type="term" value="P:DNA damage response"/>
    <property type="evidence" value="ECO:0000270"/>
    <property type="project" value="EcoCyc"/>
</dbReference>
<dbReference type="GO" id="GO:0042177">
    <property type="term" value="P:negative regulation of protein catabolic process"/>
    <property type="evidence" value="ECO:0000314"/>
    <property type="project" value="EcoCyc"/>
</dbReference>
<dbReference type="HAMAP" id="MF_02010">
    <property type="entry name" value="IraD"/>
    <property type="match status" value="1"/>
</dbReference>
<dbReference type="InterPro" id="IPR023776">
    <property type="entry name" value="Anti-adapt_IraD"/>
</dbReference>
<dbReference type="InterPro" id="IPR007048">
    <property type="entry name" value="IraD/Gp25-like"/>
</dbReference>
<dbReference type="NCBIfam" id="NF010726">
    <property type="entry name" value="PRK14128.1-1"/>
    <property type="match status" value="1"/>
</dbReference>
<dbReference type="NCBIfam" id="NF010728">
    <property type="entry name" value="PRK14128.1-3"/>
    <property type="match status" value="1"/>
</dbReference>
<dbReference type="Pfam" id="PF04965">
    <property type="entry name" value="GPW_gp25"/>
    <property type="match status" value="1"/>
</dbReference>
<dbReference type="SUPFAM" id="SSF160719">
    <property type="entry name" value="gpW/gp25-like"/>
    <property type="match status" value="1"/>
</dbReference>
<organism>
    <name type="scientific">Escherichia coli (strain K12)</name>
    <dbReference type="NCBI Taxonomy" id="83333"/>
    <lineage>
        <taxon>Bacteria</taxon>
        <taxon>Pseudomonadati</taxon>
        <taxon>Pseudomonadota</taxon>
        <taxon>Gammaproteobacteria</taxon>
        <taxon>Enterobacterales</taxon>
        <taxon>Enterobacteriaceae</taxon>
        <taxon>Escherichia</taxon>
    </lineage>
</organism>
<feature type="chain" id="PRO_0000169787" description="Anti-adapter protein IraD">
    <location>
        <begin position="1"/>
        <end position="130"/>
    </location>
</feature>
<feature type="helix" evidence="5">
    <location>
        <begin position="20"/>
        <end position="34"/>
    </location>
</feature>
<feature type="helix" evidence="5">
    <location>
        <begin position="42"/>
        <end position="45"/>
    </location>
</feature>
<feature type="helix" evidence="5">
    <location>
        <begin position="47"/>
        <end position="54"/>
    </location>
</feature>
<feature type="helix" evidence="5">
    <location>
        <begin position="59"/>
        <end position="76"/>
    </location>
</feature>
<feature type="strand" evidence="5">
    <location>
        <begin position="80"/>
        <end position="87"/>
    </location>
</feature>
<feature type="strand" evidence="5">
    <location>
        <begin position="96"/>
        <end position="103"/>
    </location>
</feature>
<feature type="strand" evidence="5">
    <location>
        <begin position="110"/>
        <end position="116"/>
    </location>
</feature>
<feature type="strand" evidence="5">
    <location>
        <begin position="118"/>
        <end position="123"/>
    </location>
</feature>
<sequence length="130" mass="14747">MMRQSLQAVLPEISGNKTSSLRKSVCSDLLTLFNSPHSALPSLLVSGMPEWQVHNPSDKHLQSWYCRQLRSALLFHEPRIAALQVNLKEAYCHTLAISLEIMLYHDDEPLTFDLVWDNGGWRSATLENVS</sequence>
<protein>
    <recommendedName>
        <fullName>Anti-adapter protein IraD</fullName>
    </recommendedName>
</protein>
<accession>P39375</accession>
<accession>Q2M5Y7</accession>
<keyword id="KW-0002">3D-structure</keyword>
<keyword id="KW-0963">Cytoplasm</keyword>
<keyword id="KW-1185">Reference proteome</keyword>
<keyword id="KW-0346">Stress response</keyword>
<evidence type="ECO:0000269" key="1">
    <source>
    </source>
</evidence>
<evidence type="ECO:0000269" key="2">
    <source>
    </source>
</evidence>
<evidence type="ECO:0000269" key="3">
    <source>
    </source>
</evidence>
<evidence type="ECO:0000305" key="4"/>
<evidence type="ECO:0007829" key="5">
    <source>
        <dbReference type="PDB" id="6OD1"/>
    </source>
</evidence>
<name>IRAD_ECOLI</name>